<name>MURI_BRUAB</name>
<organism>
    <name type="scientific">Brucella abortus biovar 1 (strain 9-941)</name>
    <dbReference type="NCBI Taxonomy" id="262698"/>
    <lineage>
        <taxon>Bacteria</taxon>
        <taxon>Pseudomonadati</taxon>
        <taxon>Pseudomonadota</taxon>
        <taxon>Alphaproteobacteria</taxon>
        <taxon>Hyphomicrobiales</taxon>
        <taxon>Brucellaceae</taxon>
        <taxon>Brucella/Ochrobactrum group</taxon>
        <taxon>Brucella</taxon>
    </lineage>
</organism>
<evidence type="ECO:0000255" key="1">
    <source>
        <dbReference type="HAMAP-Rule" id="MF_00258"/>
    </source>
</evidence>
<sequence>MKKAPAGSFPAKPTIAPERPILVFDSGIGGLTVLREARVVMPDRRFVYIADDAGFPYGNWEEEALKRRIIELFGEFIANYDPEIAVIACNTASTLVLEDLRRAYPSVPFVGTVPAIKPAAERTSSGLVSVLATPGTVKRAYTRDLIQSFASRCHVRLVGADGLAAIAEAHIRGESFDEALVMAQIAPCFIEKDGKRTDIVVLACTHYPFLVNVLRRLAPWPVDWLDPAEAIARRMKSLLPARSDDDEFHSQDDLAFFTSRKPDYAIRRLMQGFGLRF</sequence>
<keyword id="KW-0133">Cell shape</keyword>
<keyword id="KW-0961">Cell wall biogenesis/degradation</keyword>
<keyword id="KW-0413">Isomerase</keyword>
<keyword id="KW-0573">Peptidoglycan synthesis</keyword>
<dbReference type="EC" id="5.1.1.3" evidence="1"/>
<dbReference type="EMBL" id="AE017223">
    <property type="protein sequence ID" value="AAX74538.1"/>
    <property type="molecule type" value="Genomic_DNA"/>
</dbReference>
<dbReference type="RefSeq" id="WP_002964323.1">
    <property type="nucleotide sequence ID" value="NC_006932.1"/>
</dbReference>
<dbReference type="SMR" id="Q57CU6"/>
<dbReference type="EnsemblBacteria" id="AAX74538">
    <property type="protein sequence ID" value="AAX74538"/>
    <property type="gene ID" value="BruAb1_1200"/>
</dbReference>
<dbReference type="GeneID" id="97533561"/>
<dbReference type="KEGG" id="bmb:BruAb1_1200"/>
<dbReference type="HOGENOM" id="CLU_052344_2_0_5"/>
<dbReference type="UniPathway" id="UPA00219"/>
<dbReference type="Proteomes" id="UP000000540">
    <property type="component" value="Chromosome I"/>
</dbReference>
<dbReference type="GO" id="GO:0008881">
    <property type="term" value="F:glutamate racemase activity"/>
    <property type="evidence" value="ECO:0007669"/>
    <property type="project" value="UniProtKB-UniRule"/>
</dbReference>
<dbReference type="GO" id="GO:0071555">
    <property type="term" value="P:cell wall organization"/>
    <property type="evidence" value="ECO:0007669"/>
    <property type="project" value="UniProtKB-KW"/>
</dbReference>
<dbReference type="GO" id="GO:0009252">
    <property type="term" value="P:peptidoglycan biosynthetic process"/>
    <property type="evidence" value="ECO:0007669"/>
    <property type="project" value="UniProtKB-UniRule"/>
</dbReference>
<dbReference type="GO" id="GO:0008360">
    <property type="term" value="P:regulation of cell shape"/>
    <property type="evidence" value="ECO:0007669"/>
    <property type="project" value="UniProtKB-KW"/>
</dbReference>
<dbReference type="Gene3D" id="3.40.50.1860">
    <property type="match status" value="2"/>
</dbReference>
<dbReference type="HAMAP" id="MF_00258">
    <property type="entry name" value="Glu_racemase"/>
    <property type="match status" value="1"/>
</dbReference>
<dbReference type="InterPro" id="IPR015942">
    <property type="entry name" value="Asp/Glu/hydantoin_racemase"/>
</dbReference>
<dbReference type="InterPro" id="IPR001920">
    <property type="entry name" value="Asp/Glu_race"/>
</dbReference>
<dbReference type="InterPro" id="IPR018187">
    <property type="entry name" value="Asp/Glu_racemase_AS_1"/>
</dbReference>
<dbReference type="InterPro" id="IPR033134">
    <property type="entry name" value="Asp/Glu_racemase_AS_2"/>
</dbReference>
<dbReference type="InterPro" id="IPR004391">
    <property type="entry name" value="Glu_race"/>
</dbReference>
<dbReference type="NCBIfam" id="TIGR00067">
    <property type="entry name" value="glut_race"/>
    <property type="match status" value="1"/>
</dbReference>
<dbReference type="PANTHER" id="PTHR21198">
    <property type="entry name" value="GLUTAMATE RACEMASE"/>
    <property type="match status" value="1"/>
</dbReference>
<dbReference type="PANTHER" id="PTHR21198:SF2">
    <property type="entry name" value="GLUTAMATE RACEMASE"/>
    <property type="match status" value="1"/>
</dbReference>
<dbReference type="Pfam" id="PF01177">
    <property type="entry name" value="Asp_Glu_race"/>
    <property type="match status" value="1"/>
</dbReference>
<dbReference type="SUPFAM" id="SSF53681">
    <property type="entry name" value="Aspartate/glutamate racemase"/>
    <property type="match status" value="2"/>
</dbReference>
<dbReference type="PROSITE" id="PS00923">
    <property type="entry name" value="ASP_GLU_RACEMASE_1"/>
    <property type="match status" value="1"/>
</dbReference>
<dbReference type="PROSITE" id="PS00924">
    <property type="entry name" value="ASP_GLU_RACEMASE_2"/>
    <property type="match status" value="1"/>
</dbReference>
<protein>
    <recommendedName>
        <fullName evidence="1">Glutamate racemase</fullName>
        <ecNumber evidence="1">5.1.1.3</ecNumber>
    </recommendedName>
</protein>
<comment type="function">
    <text evidence="1">Provides the (R)-glutamate required for cell wall biosynthesis.</text>
</comment>
<comment type="catalytic activity">
    <reaction evidence="1">
        <text>L-glutamate = D-glutamate</text>
        <dbReference type="Rhea" id="RHEA:12813"/>
        <dbReference type="ChEBI" id="CHEBI:29985"/>
        <dbReference type="ChEBI" id="CHEBI:29986"/>
        <dbReference type="EC" id="5.1.1.3"/>
    </reaction>
</comment>
<comment type="pathway">
    <text evidence="1">Cell wall biogenesis; peptidoglycan biosynthesis.</text>
</comment>
<comment type="similarity">
    <text evidence="1">Belongs to the aspartate/glutamate racemases family.</text>
</comment>
<accession>Q57CU6</accession>
<proteinExistence type="inferred from homology"/>
<gene>
    <name evidence="1" type="primary">murI</name>
    <name type="ordered locus">BruAb1_1200</name>
</gene>
<reference key="1">
    <citation type="journal article" date="2005" name="J. Bacteriol.">
        <title>Completion of the genome sequence of Brucella abortus and comparison to the highly similar genomes of Brucella melitensis and Brucella suis.</title>
        <authorList>
            <person name="Halling S.M."/>
            <person name="Peterson-Burch B.D."/>
            <person name="Bricker B.J."/>
            <person name="Zuerner R.L."/>
            <person name="Qing Z."/>
            <person name="Li L.-L."/>
            <person name="Kapur V."/>
            <person name="Alt D.P."/>
            <person name="Olsen S.C."/>
        </authorList>
    </citation>
    <scope>NUCLEOTIDE SEQUENCE [LARGE SCALE GENOMIC DNA]</scope>
    <source>
        <strain>9-941</strain>
    </source>
</reference>
<feature type="chain" id="PRO_1000047550" description="Glutamate racemase">
    <location>
        <begin position="1"/>
        <end position="277"/>
    </location>
</feature>
<feature type="active site" description="Proton donor/acceptor" evidence="1">
    <location>
        <position position="89"/>
    </location>
</feature>
<feature type="active site" description="Proton donor/acceptor" evidence="1">
    <location>
        <position position="204"/>
    </location>
</feature>
<feature type="binding site" evidence="1">
    <location>
        <begin position="25"/>
        <end position="26"/>
    </location>
    <ligand>
        <name>substrate</name>
    </ligand>
</feature>
<feature type="binding site" evidence="1">
    <location>
        <begin position="57"/>
        <end position="58"/>
    </location>
    <ligand>
        <name>substrate</name>
    </ligand>
</feature>
<feature type="binding site" evidence="1">
    <location>
        <begin position="90"/>
        <end position="91"/>
    </location>
    <ligand>
        <name>substrate</name>
    </ligand>
</feature>
<feature type="binding site" evidence="1">
    <location>
        <begin position="205"/>
        <end position="206"/>
    </location>
    <ligand>
        <name>substrate</name>
    </ligand>
</feature>